<keyword id="KW-0997">Cell inner membrane</keyword>
<keyword id="KW-1003">Cell membrane</keyword>
<keyword id="KW-0350">Heme biosynthesis</keyword>
<keyword id="KW-0472">Membrane</keyword>
<keyword id="KW-1185">Reference proteome</keyword>
<keyword id="KW-0808">Transferase</keyword>
<keyword id="KW-0812">Transmembrane</keyword>
<keyword id="KW-1133">Transmembrane helix</keyword>
<name>COXX_NOSS1</name>
<reference key="1">
    <citation type="journal article" date="2001" name="DNA Res.">
        <title>Complete genomic sequence of the filamentous nitrogen-fixing cyanobacterium Anabaena sp. strain PCC 7120.</title>
        <authorList>
            <person name="Kaneko T."/>
            <person name="Nakamura Y."/>
            <person name="Wolk C.P."/>
            <person name="Kuritz T."/>
            <person name="Sasamoto S."/>
            <person name="Watanabe A."/>
            <person name="Iriguchi M."/>
            <person name="Ishikawa A."/>
            <person name="Kawashima K."/>
            <person name="Kimura T."/>
            <person name="Kishida Y."/>
            <person name="Kohara M."/>
            <person name="Matsumoto M."/>
            <person name="Matsuno A."/>
            <person name="Muraki A."/>
            <person name="Nakazaki N."/>
            <person name="Shimpo S."/>
            <person name="Sugimoto M."/>
            <person name="Takazawa M."/>
            <person name="Yamada M."/>
            <person name="Yasuda M."/>
            <person name="Tabata S."/>
        </authorList>
    </citation>
    <scope>NUCLEOTIDE SEQUENCE [LARGE SCALE GENOMIC DNA]</scope>
    <source>
        <strain>PCC 7120 / SAG 25.82 / UTEX 2576</strain>
    </source>
</reference>
<gene>
    <name evidence="1" type="primary">ctaB</name>
    <name type="ordered locus">all0948</name>
</gene>
<proteinExistence type="inferred from homology"/>
<dbReference type="EC" id="2.5.1.141" evidence="1"/>
<dbReference type="EMBL" id="BA000019">
    <property type="protein sequence ID" value="BAB72905.1"/>
    <property type="molecule type" value="Genomic_DNA"/>
</dbReference>
<dbReference type="PIR" id="AI1924">
    <property type="entry name" value="AI1924"/>
</dbReference>
<dbReference type="RefSeq" id="WP_010995122.1">
    <property type="nucleotide sequence ID" value="NZ_RSCN01000006.1"/>
</dbReference>
<dbReference type="SMR" id="Q8YYA3"/>
<dbReference type="STRING" id="103690.gene:10492962"/>
<dbReference type="KEGG" id="ana:all0948"/>
<dbReference type="eggNOG" id="COG0109">
    <property type="taxonomic scope" value="Bacteria"/>
</dbReference>
<dbReference type="OrthoDB" id="9814417at2"/>
<dbReference type="UniPathway" id="UPA00834">
    <property type="reaction ID" value="UER00712"/>
</dbReference>
<dbReference type="Proteomes" id="UP000002483">
    <property type="component" value="Chromosome"/>
</dbReference>
<dbReference type="GO" id="GO:0005886">
    <property type="term" value="C:plasma membrane"/>
    <property type="evidence" value="ECO:0007669"/>
    <property type="project" value="UniProtKB-SubCell"/>
</dbReference>
<dbReference type="GO" id="GO:0008495">
    <property type="term" value="F:protoheme IX farnesyltransferase activity"/>
    <property type="evidence" value="ECO:0007669"/>
    <property type="project" value="UniProtKB-UniRule"/>
</dbReference>
<dbReference type="GO" id="GO:0048034">
    <property type="term" value="P:heme O biosynthetic process"/>
    <property type="evidence" value="ECO:0007669"/>
    <property type="project" value="UniProtKB-UniRule"/>
</dbReference>
<dbReference type="CDD" id="cd13957">
    <property type="entry name" value="PT_UbiA_Cox10"/>
    <property type="match status" value="1"/>
</dbReference>
<dbReference type="FunFam" id="1.10.357.140:FF:000001">
    <property type="entry name" value="Protoheme IX farnesyltransferase"/>
    <property type="match status" value="1"/>
</dbReference>
<dbReference type="Gene3D" id="1.10.357.140">
    <property type="entry name" value="UbiA prenyltransferase"/>
    <property type="match status" value="1"/>
</dbReference>
<dbReference type="HAMAP" id="MF_00154">
    <property type="entry name" value="CyoE_CtaB"/>
    <property type="match status" value="1"/>
</dbReference>
<dbReference type="InterPro" id="IPR006369">
    <property type="entry name" value="Protohaem_IX_farnesylTrfase"/>
</dbReference>
<dbReference type="InterPro" id="IPR000537">
    <property type="entry name" value="UbiA_prenyltransferase"/>
</dbReference>
<dbReference type="InterPro" id="IPR030470">
    <property type="entry name" value="UbiA_prenylTrfase_CS"/>
</dbReference>
<dbReference type="InterPro" id="IPR044878">
    <property type="entry name" value="UbiA_sf"/>
</dbReference>
<dbReference type="NCBIfam" id="TIGR01473">
    <property type="entry name" value="cyoE_ctaB"/>
    <property type="match status" value="1"/>
</dbReference>
<dbReference type="NCBIfam" id="NF003349">
    <property type="entry name" value="PRK04375.1-2"/>
    <property type="match status" value="1"/>
</dbReference>
<dbReference type="PANTHER" id="PTHR43448:SF7">
    <property type="entry name" value="4-HYDROXYBENZOATE SOLANESYLTRANSFERASE"/>
    <property type="match status" value="1"/>
</dbReference>
<dbReference type="PANTHER" id="PTHR43448">
    <property type="entry name" value="PROTOHEME IX FARNESYLTRANSFERASE, MITOCHONDRIAL"/>
    <property type="match status" value="1"/>
</dbReference>
<dbReference type="Pfam" id="PF01040">
    <property type="entry name" value="UbiA"/>
    <property type="match status" value="1"/>
</dbReference>
<dbReference type="PROSITE" id="PS00943">
    <property type="entry name" value="UBIA"/>
    <property type="match status" value="1"/>
</dbReference>
<evidence type="ECO:0000255" key="1">
    <source>
        <dbReference type="HAMAP-Rule" id="MF_00154"/>
    </source>
</evidence>
<sequence>MIETNVSRRHHETFIQVIQSYYQLTKPRIIPLLLITTAGSMWIAAQGQVDPVLLLVTMAGGTLAAASAQTINCIYDRDIDYEMERTRHRPMPSGKVQVRDALIFAIALAVLSFTLLTVFANLLAASLALSGIIFYVLIYTHWLKRHSTQNIVIGGAAGAIPALVGWAAVTGTLSWSAWLIFAIVFLWTPPHFWALALMIRDDYAKVGIPMLPVVEGNAATVKQIWYYTLITVAATLLLVYPLHASGIVYAAIAISLGAVFIRKSWRLLHNPEDRPTARELFLYSISYMMLLCLGMVVDSLPLTHHLVNAAINQLHLIS</sequence>
<organism>
    <name type="scientific">Nostoc sp. (strain PCC 7120 / SAG 25.82 / UTEX 2576)</name>
    <dbReference type="NCBI Taxonomy" id="103690"/>
    <lineage>
        <taxon>Bacteria</taxon>
        <taxon>Bacillati</taxon>
        <taxon>Cyanobacteriota</taxon>
        <taxon>Cyanophyceae</taxon>
        <taxon>Nostocales</taxon>
        <taxon>Nostocaceae</taxon>
        <taxon>Nostoc</taxon>
    </lineage>
</organism>
<comment type="function">
    <text evidence="1">Converts heme B (protoheme IX) to heme O by substitution of the vinyl group on carbon 2 of heme B porphyrin ring with a hydroxyethyl farnesyl side group.</text>
</comment>
<comment type="catalytic activity">
    <reaction evidence="1">
        <text>heme b + (2E,6E)-farnesyl diphosphate + H2O = Fe(II)-heme o + diphosphate</text>
        <dbReference type="Rhea" id="RHEA:28070"/>
        <dbReference type="ChEBI" id="CHEBI:15377"/>
        <dbReference type="ChEBI" id="CHEBI:33019"/>
        <dbReference type="ChEBI" id="CHEBI:60344"/>
        <dbReference type="ChEBI" id="CHEBI:60530"/>
        <dbReference type="ChEBI" id="CHEBI:175763"/>
        <dbReference type="EC" id="2.5.1.141"/>
    </reaction>
</comment>
<comment type="pathway">
    <text evidence="1">Porphyrin-containing compound metabolism; heme O biosynthesis; heme O from protoheme: step 1/1.</text>
</comment>
<comment type="subcellular location">
    <subcellularLocation>
        <location evidence="1">Cell inner membrane</location>
        <topology evidence="1">Multi-pass membrane protein</topology>
    </subcellularLocation>
</comment>
<comment type="miscellaneous">
    <text evidence="1">Carbon 2 of the heme B porphyrin ring is defined according to the Fischer nomenclature.</text>
</comment>
<comment type="similarity">
    <text evidence="1">Belongs to the UbiA prenyltransferase family. Protoheme IX farnesyltransferase subfamily.</text>
</comment>
<protein>
    <recommendedName>
        <fullName evidence="1">Protoheme IX farnesyltransferase</fullName>
        <ecNumber evidence="1">2.5.1.141</ecNumber>
    </recommendedName>
    <alternativeName>
        <fullName evidence="1">Heme B farnesyltransferase</fullName>
    </alternativeName>
    <alternativeName>
        <fullName evidence="1">Heme O synthase</fullName>
    </alternativeName>
</protein>
<feature type="chain" id="PRO_0000326989" description="Protoheme IX farnesyltransferase">
    <location>
        <begin position="1"/>
        <end position="318"/>
    </location>
</feature>
<feature type="transmembrane region" description="Helical" evidence="1">
    <location>
        <begin position="29"/>
        <end position="49"/>
    </location>
</feature>
<feature type="transmembrane region" description="Helical" evidence="1">
    <location>
        <begin position="51"/>
        <end position="71"/>
    </location>
</feature>
<feature type="transmembrane region" description="Helical" evidence="1">
    <location>
        <begin position="102"/>
        <end position="122"/>
    </location>
</feature>
<feature type="transmembrane region" description="Helical" evidence="1">
    <location>
        <begin position="123"/>
        <end position="143"/>
    </location>
</feature>
<feature type="transmembrane region" description="Helical" evidence="1">
    <location>
        <begin position="151"/>
        <end position="171"/>
    </location>
</feature>
<feature type="transmembrane region" description="Helical" evidence="1">
    <location>
        <begin position="179"/>
        <end position="199"/>
    </location>
</feature>
<feature type="transmembrane region" description="Helical" evidence="1">
    <location>
        <begin position="219"/>
        <end position="239"/>
    </location>
</feature>
<feature type="transmembrane region" description="Helical" evidence="1">
    <location>
        <begin position="241"/>
        <end position="261"/>
    </location>
</feature>
<feature type="transmembrane region" description="Helical" evidence="1">
    <location>
        <begin position="280"/>
        <end position="300"/>
    </location>
</feature>
<accession>Q8YYA3</accession>